<proteinExistence type="inferred from homology"/>
<keyword id="KW-0238">DNA-binding</keyword>
<keyword id="KW-0539">Nucleus</keyword>
<keyword id="KW-0804">Transcription</keyword>
<keyword id="KW-0805">Transcription regulation</keyword>
<gene>
    <name type="primary">MATALPHA1</name>
</gene>
<protein>
    <recommendedName>
        <fullName>Mating-type protein ALPHA1</fullName>
    </recommendedName>
    <alternativeName>
        <fullName>MATalpha1 transcription factor</fullName>
    </alternativeName>
</protein>
<dbReference type="EMBL" id="AJ617305">
    <property type="protein sequence ID" value="CAE84418.1"/>
    <property type="molecule type" value="Genomic_DNA"/>
</dbReference>
<dbReference type="SMR" id="Q707Y7"/>
<dbReference type="GO" id="GO:0005634">
    <property type="term" value="C:nucleus"/>
    <property type="evidence" value="ECO:0007669"/>
    <property type="project" value="UniProtKB-SubCell"/>
</dbReference>
<dbReference type="GO" id="GO:0008301">
    <property type="term" value="F:DNA binding, bending"/>
    <property type="evidence" value="ECO:0007669"/>
    <property type="project" value="InterPro"/>
</dbReference>
<dbReference type="GO" id="GO:0043565">
    <property type="term" value="F:sequence-specific DNA binding"/>
    <property type="evidence" value="ECO:0007669"/>
    <property type="project" value="InterPro"/>
</dbReference>
<dbReference type="GO" id="GO:0045895">
    <property type="term" value="P:positive regulation of mating-type specific transcription, DNA-templated"/>
    <property type="evidence" value="ECO:0007669"/>
    <property type="project" value="InterPro"/>
</dbReference>
<dbReference type="InterPro" id="IPR016325">
    <property type="entry name" value="ALPHA1_Saccharomycetales"/>
</dbReference>
<dbReference type="InterPro" id="IPR006856">
    <property type="entry name" value="MATalpha_HMGbox"/>
</dbReference>
<dbReference type="Pfam" id="PF04769">
    <property type="entry name" value="MATalpha_HMGbox"/>
    <property type="match status" value="1"/>
</dbReference>
<dbReference type="PIRSF" id="PIRSF001863">
    <property type="entry name" value="Transcrpt_activ_MAT_Alpha1"/>
    <property type="match status" value="1"/>
</dbReference>
<dbReference type="PROSITE" id="PS51325">
    <property type="entry name" value="ALPHA_BOX"/>
    <property type="match status" value="1"/>
</dbReference>
<evidence type="ECO:0000255" key="1">
    <source>
        <dbReference type="PROSITE-ProRule" id="PRU00655"/>
    </source>
</evidence>
<name>MTAL1_PICAN</name>
<sequence>MMFHVLCFFGNRTSRVANLCLQLKFPPHNDSPKMALDELNLSFLTHLPQIPTTSPLLKRLLTEYGAIDNGKDSLNKVAPKKSSRHRVQKEKKRLNGFMAFRSFYSRNIANYNSQKALSQDLADAWNREKHQQIWSLYAIQYNHSKSKEPFSRWLEMKLSNKLGKFNSDDPTTRREINVMSHIVVEDVFQECSSQY</sequence>
<comment type="function">
    <text>Mating type proteins are sequence specific DNA-binding proteins that act as master switches in yeast differentiation by controlling gene expression in a cell type-specific fashion.</text>
</comment>
<comment type="subcellular location">
    <subcellularLocation>
        <location evidence="1">Nucleus</location>
    </subcellularLocation>
</comment>
<comment type="miscellaneous">
    <text>In P.angusta, all mating-type proteins (MATA1, MATALPHA1 and MATALPHA2) are encoded on one idiomorph, consistent with the fact that P.angusta is a homothallic haploid in which any strain can mate with any other strain.</text>
</comment>
<comment type="similarity">
    <text evidence="1">Belongs to the MATALPHA1 family.</text>
</comment>
<feature type="chain" id="PRO_0000206020" description="Mating-type protein ALPHA1">
    <location>
        <begin position="1"/>
        <end position="195"/>
    </location>
</feature>
<feature type="DNA-binding region" description="Alpha box" evidence="1">
    <location>
        <begin position="89"/>
        <end position="145"/>
    </location>
</feature>
<reference key="1">
    <citation type="journal article" date="2004" name="Proc. Natl. Acad. Sci. U.S.A.">
        <title>Evolution of the MAT locus and its Ho endonuclease in yeast species.</title>
        <authorList>
            <person name="Butler G."/>
            <person name="Kenny C."/>
            <person name="Fagan A."/>
            <person name="Kurischko C."/>
            <person name="Gaillardin C."/>
            <person name="Wolfe K.H."/>
        </authorList>
    </citation>
    <scope>NUCLEOTIDE SEQUENCE [GENOMIC DNA]</scope>
    <source>
        <strain>ATCC 34438 / CBS 4732 / DSM 70277 / JCM 3621 / NBRC 1476 / NRRL Y-5445</strain>
    </source>
</reference>
<accession>Q707Y7</accession>
<organism>
    <name type="scientific">Pichia angusta</name>
    <name type="common">Yeast</name>
    <name type="synonym">Hansenula polymorpha</name>
    <dbReference type="NCBI Taxonomy" id="870730"/>
    <lineage>
        <taxon>Eukaryota</taxon>
        <taxon>Fungi</taxon>
        <taxon>Dikarya</taxon>
        <taxon>Ascomycota</taxon>
        <taxon>Saccharomycotina</taxon>
        <taxon>Pichiomycetes</taxon>
        <taxon>Pichiales</taxon>
        <taxon>Pichiaceae</taxon>
        <taxon>Ogataea</taxon>
    </lineage>
</organism>